<accession>Q46GR7</accession>
<dbReference type="EC" id="6.1.1.15" evidence="1"/>
<dbReference type="EMBL" id="CP000095">
    <property type="protein sequence ID" value="AAZ59329.1"/>
    <property type="molecule type" value="Genomic_DNA"/>
</dbReference>
<dbReference type="RefSeq" id="WP_011294473.1">
    <property type="nucleotide sequence ID" value="NC_007335.2"/>
</dbReference>
<dbReference type="SMR" id="Q46GR7"/>
<dbReference type="STRING" id="59920.PMN2A_1841"/>
<dbReference type="KEGG" id="pmn:PMN2A_1841"/>
<dbReference type="HOGENOM" id="CLU_016739_0_0_3"/>
<dbReference type="OrthoDB" id="9809052at2"/>
<dbReference type="PhylomeDB" id="Q46GR7"/>
<dbReference type="Proteomes" id="UP000002535">
    <property type="component" value="Chromosome"/>
</dbReference>
<dbReference type="GO" id="GO:0005829">
    <property type="term" value="C:cytosol"/>
    <property type="evidence" value="ECO:0007669"/>
    <property type="project" value="TreeGrafter"/>
</dbReference>
<dbReference type="GO" id="GO:0002161">
    <property type="term" value="F:aminoacyl-tRNA deacylase activity"/>
    <property type="evidence" value="ECO:0007669"/>
    <property type="project" value="InterPro"/>
</dbReference>
<dbReference type="GO" id="GO:0005524">
    <property type="term" value="F:ATP binding"/>
    <property type="evidence" value="ECO:0007669"/>
    <property type="project" value="UniProtKB-UniRule"/>
</dbReference>
<dbReference type="GO" id="GO:0004827">
    <property type="term" value="F:proline-tRNA ligase activity"/>
    <property type="evidence" value="ECO:0007669"/>
    <property type="project" value="UniProtKB-UniRule"/>
</dbReference>
<dbReference type="GO" id="GO:0006433">
    <property type="term" value="P:prolyl-tRNA aminoacylation"/>
    <property type="evidence" value="ECO:0007669"/>
    <property type="project" value="UniProtKB-UniRule"/>
</dbReference>
<dbReference type="CDD" id="cd04334">
    <property type="entry name" value="ProRS-INS"/>
    <property type="match status" value="1"/>
</dbReference>
<dbReference type="CDD" id="cd00861">
    <property type="entry name" value="ProRS_anticodon_short"/>
    <property type="match status" value="1"/>
</dbReference>
<dbReference type="Gene3D" id="3.40.50.800">
    <property type="entry name" value="Anticodon-binding domain"/>
    <property type="match status" value="1"/>
</dbReference>
<dbReference type="Gene3D" id="3.30.930.10">
    <property type="entry name" value="Bira Bifunctional Protein, Domain 2"/>
    <property type="match status" value="2"/>
</dbReference>
<dbReference type="HAMAP" id="MF_01569">
    <property type="entry name" value="Pro_tRNA_synth_type1"/>
    <property type="match status" value="1"/>
</dbReference>
<dbReference type="InterPro" id="IPR002314">
    <property type="entry name" value="aa-tRNA-synt_IIb"/>
</dbReference>
<dbReference type="InterPro" id="IPR006195">
    <property type="entry name" value="aa-tRNA-synth_II"/>
</dbReference>
<dbReference type="InterPro" id="IPR045864">
    <property type="entry name" value="aa-tRNA-synth_II/BPL/LPL"/>
</dbReference>
<dbReference type="InterPro" id="IPR004154">
    <property type="entry name" value="Anticodon-bd"/>
</dbReference>
<dbReference type="InterPro" id="IPR036621">
    <property type="entry name" value="Anticodon-bd_dom_sf"/>
</dbReference>
<dbReference type="InterPro" id="IPR002316">
    <property type="entry name" value="Pro-tRNA-ligase_IIa"/>
</dbReference>
<dbReference type="InterPro" id="IPR004500">
    <property type="entry name" value="Pro-tRNA-synth_IIa_bac-type"/>
</dbReference>
<dbReference type="InterPro" id="IPR023717">
    <property type="entry name" value="Pro-tRNA-Synthase_IIa_type1"/>
</dbReference>
<dbReference type="InterPro" id="IPR050062">
    <property type="entry name" value="Pro-tRNA_synthetase"/>
</dbReference>
<dbReference type="InterPro" id="IPR044140">
    <property type="entry name" value="ProRS_anticodon_short"/>
</dbReference>
<dbReference type="InterPro" id="IPR036754">
    <property type="entry name" value="YbaK/aa-tRNA-synt-asso_dom_sf"/>
</dbReference>
<dbReference type="InterPro" id="IPR007214">
    <property type="entry name" value="YbaK/aa-tRNA-synth-assoc-dom"/>
</dbReference>
<dbReference type="NCBIfam" id="NF006625">
    <property type="entry name" value="PRK09194.1"/>
    <property type="match status" value="1"/>
</dbReference>
<dbReference type="NCBIfam" id="TIGR00409">
    <property type="entry name" value="proS_fam_II"/>
    <property type="match status" value="1"/>
</dbReference>
<dbReference type="PANTHER" id="PTHR42753">
    <property type="entry name" value="MITOCHONDRIAL RIBOSOME PROTEIN L39/PROLYL-TRNA LIGASE FAMILY MEMBER"/>
    <property type="match status" value="1"/>
</dbReference>
<dbReference type="PANTHER" id="PTHR42753:SF2">
    <property type="entry name" value="PROLINE--TRNA LIGASE"/>
    <property type="match status" value="1"/>
</dbReference>
<dbReference type="Pfam" id="PF03129">
    <property type="entry name" value="HGTP_anticodon"/>
    <property type="match status" value="1"/>
</dbReference>
<dbReference type="Pfam" id="PF00587">
    <property type="entry name" value="tRNA-synt_2b"/>
    <property type="match status" value="1"/>
</dbReference>
<dbReference type="Pfam" id="PF04073">
    <property type="entry name" value="tRNA_edit"/>
    <property type="match status" value="1"/>
</dbReference>
<dbReference type="PRINTS" id="PR01046">
    <property type="entry name" value="TRNASYNTHPRO"/>
</dbReference>
<dbReference type="SUPFAM" id="SSF52954">
    <property type="entry name" value="Class II aaRS ABD-related"/>
    <property type="match status" value="1"/>
</dbReference>
<dbReference type="SUPFAM" id="SSF55681">
    <property type="entry name" value="Class II aaRS and biotin synthetases"/>
    <property type="match status" value="1"/>
</dbReference>
<dbReference type="SUPFAM" id="SSF55826">
    <property type="entry name" value="YbaK/ProRS associated domain"/>
    <property type="match status" value="1"/>
</dbReference>
<dbReference type="PROSITE" id="PS50862">
    <property type="entry name" value="AA_TRNA_LIGASE_II"/>
    <property type="match status" value="1"/>
</dbReference>
<sequence>MRVSRLMLNTLRDVPAEADIISHQLLVRGGYVKRLTGGIYAYMPLLWKVLKKITSIVEEELSTKGCLQTLLPQLQPSEIWERSGRWKSYTKGEGIMFSLKDRQGKELGLGPTHEEVITQIISQTIHSYKQLPINIFQIQTKFRDEIRPRFGLMRSREFIMKDAYSFHANENDLQSTYSDMRNAYENIFTKCGLDFVCVDADSGAIGGAASQEFMVTAESGEDLILISSDSKYGANQEKAVSIIEEGKLLEPNKPSIIKTPNQKTIDELCNYNDFHPSQIVKVLAYLATCDDNKKYPVLVSIRGDQEINDIKLSNKISQELKQNVLDIRIISNEDMQKQGISNIPFGFIGPDLSDNLLAQSKAWEKKFIRIADNSAKDLKSFICGNNIKDEHKIFYNWNLINTVQMICDIRKAKPGDRCIHDKTQKLQECRGIEIGHIFQLGTKYSKSLNATFTNEKGVEDHFWMGCYGIGISRLAQAAVEQNHDDLGIIWPTSIAPFTVIIIIANIKNNDQKCLAEDIYQKLIQDRVDVLLDDRDERAGIKFKDADLIGIPWRIVAGREASSGLVELHNRKTKITELLDLNSVFKKLSEEFNTEKL</sequence>
<proteinExistence type="inferred from homology"/>
<reference key="1">
    <citation type="journal article" date="2007" name="PLoS Genet.">
        <title>Patterns and implications of gene gain and loss in the evolution of Prochlorococcus.</title>
        <authorList>
            <person name="Kettler G.C."/>
            <person name="Martiny A.C."/>
            <person name="Huang K."/>
            <person name="Zucker J."/>
            <person name="Coleman M.L."/>
            <person name="Rodrigue S."/>
            <person name="Chen F."/>
            <person name="Lapidus A."/>
            <person name="Ferriera S."/>
            <person name="Johnson J."/>
            <person name="Steglich C."/>
            <person name="Church G.M."/>
            <person name="Richardson P."/>
            <person name="Chisholm S.W."/>
        </authorList>
    </citation>
    <scope>NUCLEOTIDE SEQUENCE [LARGE SCALE GENOMIC DNA]</scope>
    <source>
        <strain>NATL2A</strain>
    </source>
</reference>
<keyword id="KW-0030">Aminoacyl-tRNA synthetase</keyword>
<keyword id="KW-0067">ATP-binding</keyword>
<keyword id="KW-0963">Cytoplasm</keyword>
<keyword id="KW-0436">Ligase</keyword>
<keyword id="KW-0547">Nucleotide-binding</keyword>
<keyword id="KW-0648">Protein biosynthesis</keyword>
<keyword id="KW-1185">Reference proteome</keyword>
<protein>
    <recommendedName>
        <fullName evidence="1">Proline--tRNA ligase</fullName>
        <ecNumber evidence="1">6.1.1.15</ecNumber>
    </recommendedName>
    <alternativeName>
        <fullName evidence="1">Prolyl-tRNA synthetase</fullName>
        <shortName evidence="1">ProRS</shortName>
    </alternativeName>
</protein>
<feature type="chain" id="PRO_0000248740" description="Proline--tRNA ligase">
    <location>
        <begin position="1"/>
        <end position="596"/>
    </location>
</feature>
<comment type="function">
    <text evidence="1">Catalyzes the attachment of proline to tRNA(Pro) in a two-step reaction: proline is first activated by ATP to form Pro-AMP and then transferred to the acceptor end of tRNA(Pro). As ProRS can inadvertently accommodate and process non-cognate amino acids such as alanine and cysteine, to avoid such errors it has two additional distinct editing activities against alanine. One activity is designated as 'pretransfer' editing and involves the tRNA(Pro)-independent hydrolysis of activated Ala-AMP. The other activity is designated 'posttransfer' editing and involves deacylation of mischarged Ala-tRNA(Pro). The misacylated Cys-tRNA(Pro) is not edited by ProRS.</text>
</comment>
<comment type="catalytic activity">
    <reaction evidence="1">
        <text>tRNA(Pro) + L-proline + ATP = L-prolyl-tRNA(Pro) + AMP + diphosphate</text>
        <dbReference type="Rhea" id="RHEA:14305"/>
        <dbReference type="Rhea" id="RHEA-COMP:9700"/>
        <dbReference type="Rhea" id="RHEA-COMP:9702"/>
        <dbReference type="ChEBI" id="CHEBI:30616"/>
        <dbReference type="ChEBI" id="CHEBI:33019"/>
        <dbReference type="ChEBI" id="CHEBI:60039"/>
        <dbReference type="ChEBI" id="CHEBI:78442"/>
        <dbReference type="ChEBI" id="CHEBI:78532"/>
        <dbReference type="ChEBI" id="CHEBI:456215"/>
        <dbReference type="EC" id="6.1.1.15"/>
    </reaction>
</comment>
<comment type="subunit">
    <text evidence="1">Homodimer.</text>
</comment>
<comment type="subcellular location">
    <subcellularLocation>
        <location evidence="1">Cytoplasm</location>
    </subcellularLocation>
</comment>
<comment type="domain">
    <text evidence="1">Consists of three domains: the N-terminal catalytic domain, the editing domain and the C-terminal anticodon-binding domain.</text>
</comment>
<comment type="similarity">
    <text evidence="1">Belongs to the class-II aminoacyl-tRNA synthetase family. ProS type 1 subfamily.</text>
</comment>
<gene>
    <name evidence="1" type="primary">proS</name>
    <name type="ordered locus">PMN2A_1841</name>
</gene>
<organism>
    <name type="scientific">Prochlorococcus marinus (strain NATL2A)</name>
    <dbReference type="NCBI Taxonomy" id="59920"/>
    <lineage>
        <taxon>Bacteria</taxon>
        <taxon>Bacillati</taxon>
        <taxon>Cyanobacteriota</taxon>
        <taxon>Cyanophyceae</taxon>
        <taxon>Synechococcales</taxon>
        <taxon>Prochlorococcaceae</taxon>
        <taxon>Prochlorococcus</taxon>
    </lineage>
</organism>
<name>SYP_PROMT</name>
<evidence type="ECO:0000255" key="1">
    <source>
        <dbReference type="HAMAP-Rule" id="MF_01569"/>
    </source>
</evidence>